<accession>Q8FB81</accession>
<protein>
    <recommendedName>
        <fullName evidence="1">Thiazole synthase</fullName>
        <ecNumber evidence="1">2.8.1.10</ecNumber>
    </recommendedName>
</protein>
<comment type="function">
    <text evidence="1">Catalyzes the rearrangement of 1-deoxy-D-xylulose 5-phosphate (DXP) to produce the thiazole phosphate moiety of thiamine. Sulfur is provided by the thiocarboxylate moiety of the carrier protein ThiS. In vitro, sulfur can be provided by H(2)S.</text>
</comment>
<comment type="catalytic activity">
    <reaction evidence="1">
        <text>[ThiS sulfur-carrier protein]-C-terminal-Gly-aminoethanethioate + 2-iminoacetate + 1-deoxy-D-xylulose 5-phosphate = [ThiS sulfur-carrier protein]-C-terminal Gly-Gly + 2-[(2R,5Z)-2-carboxy-4-methylthiazol-5(2H)-ylidene]ethyl phosphate + 2 H2O + H(+)</text>
        <dbReference type="Rhea" id="RHEA:26297"/>
        <dbReference type="Rhea" id="RHEA-COMP:12909"/>
        <dbReference type="Rhea" id="RHEA-COMP:19908"/>
        <dbReference type="ChEBI" id="CHEBI:15377"/>
        <dbReference type="ChEBI" id="CHEBI:15378"/>
        <dbReference type="ChEBI" id="CHEBI:57792"/>
        <dbReference type="ChEBI" id="CHEBI:62899"/>
        <dbReference type="ChEBI" id="CHEBI:77846"/>
        <dbReference type="ChEBI" id="CHEBI:90778"/>
        <dbReference type="ChEBI" id="CHEBI:232372"/>
        <dbReference type="EC" id="2.8.1.10"/>
    </reaction>
</comment>
<comment type="pathway">
    <text evidence="1">Cofactor biosynthesis; thiamine diphosphate biosynthesis.</text>
</comment>
<comment type="subunit">
    <text evidence="1">Homotetramer. Forms heterodimers with either ThiH or ThiS.</text>
</comment>
<comment type="subcellular location">
    <subcellularLocation>
        <location evidence="1">Cytoplasm</location>
    </subcellularLocation>
</comment>
<comment type="similarity">
    <text evidence="1">Belongs to the ThiG family.</text>
</comment>
<comment type="sequence caution" evidence="2">
    <conflict type="erroneous initiation">
        <sequence resource="EMBL-CDS" id="AAN83375"/>
    </conflict>
</comment>
<proteinExistence type="inferred from homology"/>
<keyword id="KW-0963">Cytoplasm</keyword>
<keyword id="KW-1185">Reference proteome</keyword>
<keyword id="KW-0704">Schiff base</keyword>
<keyword id="KW-0784">Thiamine biosynthesis</keyword>
<keyword id="KW-0808">Transferase</keyword>
<dbReference type="EC" id="2.8.1.10" evidence="1"/>
<dbReference type="EMBL" id="AE014075">
    <property type="protein sequence ID" value="AAN83375.1"/>
    <property type="status" value="ALT_INIT"/>
    <property type="molecule type" value="Genomic_DNA"/>
</dbReference>
<dbReference type="RefSeq" id="WP_000902352.1">
    <property type="nucleotide sequence ID" value="NZ_CP051263.1"/>
</dbReference>
<dbReference type="SMR" id="Q8FB81"/>
<dbReference type="STRING" id="199310.c4947"/>
<dbReference type="KEGG" id="ecc:c4947"/>
<dbReference type="eggNOG" id="COG2022">
    <property type="taxonomic scope" value="Bacteria"/>
</dbReference>
<dbReference type="HOGENOM" id="CLU_062233_1_0_6"/>
<dbReference type="UniPathway" id="UPA00060"/>
<dbReference type="Proteomes" id="UP000001410">
    <property type="component" value="Chromosome"/>
</dbReference>
<dbReference type="GO" id="GO:0005737">
    <property type="term" value="C:cytoplasm"/>
    <property type="evidence" value="ECO:0007669"/>
    <property type="project" value="UniProtKB-SubCell"/>
</dbReference>
<dbReference type="GO" id="GO:1990107">
    <property type="term" value="F:thiazole synthase activity"/>
    <property type="evidence" value="ECO:0007669"/>
    <property type="project" value="UniProtKB-EC"/>
</dbReference>
<dbReference type="GO" id="GO:0009229">
    <property type="term" value="P:thiamine diphosphate biosynthetic process"/>
    <property type="evidence" value="ECO:0007669"/>
    <property type="project" value="UniProtKB-UniRule"/>
</dbReference>
<dbReference type="CDD" id="cd04728">
    <property type="entry name" value="ThiG"/>
    <property type="match status" value="1"/>
</dbReference>
<dbReference type="FunFam" id="3.20.20.70:FF:000049">
    <property type="entry name" value="Thiazole synthase"/>
    <property type="match status" value="1"/>
</dbReference>
<dbReference type="Gene3D" id="3.20.20.70">
    <property type="entry name" value="Aldolase class I"/>
    <property type="match status" value="1"/>
</dbReference>
<dbReference type="HAMAP" id="MF_00443">
    <property type="entry name" value="ThiG"/>
    <property type="match status" value="1"/>
</dbReference>
<dbReference type="InterPro" id="IPR013785">
    <property type="entry name" value="Aldolase_TIM"/>
</dbReference>
<dbReference type="InterPro" id="IPR033983">
    <property type="entry name" value="Thiazole_synthase_ThiG"/>
</dbReference>
<dbReference type="InterPro" id="IPR008867">
    <property type="entry name" value="ThiG"/>
</dbReference>
<dbReference type="PANTHER" id="PTHR34266">
    <property type="entry name" value="THIAZOLE SYNTHASE"/>
    <property type="match status" value="1"/>
</dbReference>
<dbReference type="PANTHER" id="PTHR34266:SF2">
    <property type="entry name" value="THIAZOLE SYNTHASE"/>
    <property type="match status" value="1"/>
</dbReference>
<dbReference type="Pfam" id="PF05690">
    <property type="entry name" value="ThiG"/>
    <property type="match status" value="1"/>
</dbReference>
<dbReference type="SUPFAM" id="SSF110399">
    <property type="entry name" value="ThiG-like"/>
    <property type="match status" value="1"/>
</dbReference>
<organism>
    <name type="scientific">Escherichia coli O6:H1 (strain CFT073 / ATCC 700928 / UPEC)</name>
    <dbReference type="NCBI Taxonomy" id="199310"/>
    <lineage>
        <taxon>Bacteria</taxon>
        <taxon>Pseudomonadati</taxon>
        <taxon>Pseudomonadota</taxon>
        <taxon>Gammaproteobacteria</taxon>
        <taxon>Enterobacterales</taxon>
        <taxon>Enterobacteriaceae</taxon>
        <taxon>Escherichia</taxon>
    </lineage>
</organism>
<evidence type="ECO:0000255" key="1">
    <source>
        <dbReference type="HAMAP-Rule" id="MF_00443"/>
    </source>
</evidence>
<evidence type="ECO:0000305" key="2"/>
<gene>
    <name evidence="1" type="primary">thiG</name>
    <name type="ordered locus">c4947</name>
</gene>
<name>THIG_ECOL6</name>
<sequence>MLHIADKTFDSHLFTGTGKFASSQLMVESIRASGSQLVTLAMKRVDLRQHNDAILEPLIAAGVTLLPNTSGAKTAEEAIFAAHLAREALGTNWLKLEIHPDARWLLPDPIETLKAAETLVQQGFVVLPYCGADPVLCKRLEEVGCAAVMPLGAPIGSNQGLETRAMLEIIIQQATVPVVVDAGIGVPSHAAQALEMGANAVLVNTAIAVADDPVNMAKAFRLAVEAGLLARQAGPGSRSHFAHATSPLTEFLEASA</sequence>
<feature type="chain" id="PRO_0000162816" description="Thiazole synthase">
    <location>
        <begin position="1"/>
        <end position="256"/>
    </location>
</feature>
<feature type="active site" description="Schiff-base intermediate with DXP" evidence="1">
    <location>
        <position position="95"/>
    </location>
</feature>
<feature type="binding site" evidence="1">
    <location>
        <position position="156"/>
    </location>
    <ligand>
        <name>1-deoxy-D-xylulose 5-phosphate</name>
        <dbReference type="ChEBI" id="CHEBI:57792"/>
    </ligand>
</feature>
<feature type="binding site" evidence="1">
    <location>
        <begin position="182"/>
        <end position="183"/>
    </location>
    <ligand>
        <name>1-deoxy-D-xylulose 5-phosphate</name>
        <dbReference type="ChEBI" id="CHEBI:57792"/>
    </ligand>
</feature>
<feature type="binding site" evidence="1">
    <location>
        <begin position="204"/>
        <end position="205"/>
    </location>
    <ligand>
        <name>1-deoxy-D-xylulose 5-phosphate</name>
        <dbReference type="ChEBI" id="CHEBI:57792"/>
    </ligand>
</feature>
<reference key="1">
    <citation type="journal article" date="2002" name="Proc. Natl. Acad. Sci. U.S.A.">
        <title>Extensive mosaic structure revealed by the complete genome sequence of uropathogenic Escherichia coli.</title>
        <authorList>
            <person name="Welch R.A."/>
            <person name="Burland V."/>
            <person name="Plunkett G. III"/>
            <person name="Redford P."/>
            <person name="Roesch P."/>
            <person name="Rasko D."/>
            <person name="Buckles E.L."/>
            <person name="Liou S.-R."/>
            <person name="Boutin A."/>
            <person name="Hackett J."/>
            <person name="Stroud D."/>
            <person name="Mayhew G.F."/>
            <person name="Rose D.J."/>
            <person name="Zhou S."/>
            <person name="Schwartz D.C."/>
            <person name="Perna N.T."/>
            <person name="Mobley H.L.T."/>
            <person name="Donnenberg M.S."/>
            <person name="Blattner F.R."/>
        </authorList>
    </citation>
    <scope>NUCLEOTIDE SEQUENCE [LARGE SCALE GENOMIC DNA]</scope>
    <source>
        <strain>CFT073 / ATCC 700928 / UPEC</strain>
    </source>
</reference>